<protein>
    <recommendedName>
        <fullName evidence="1">ATP synthase subunit a 1</fullName>
    </recommendedName>
    <alternativeName>
        <fullName evidence="1">ATP synthase F0 sector subunit a 1</fullName>
    </alternativeName>
    <alternativeName>
        <fullName evidence="1">F-ATPase subunit 6 1</fullName>
    </alternativeName>
</protein>
<proteinExistence type="inferred from homology"/>
<gene>
    <name evidence="1" type="primary">atpB1</name>
    <name evidence="1" type="synonym">atpI1</name>
    <name type="ordered locus">AM1_0891</name>
</gene>
<organism>
    <name type="scientific">Acaryochloris marina (strain MBIC 11017)</name>
    <dbReference type="NCBI Taxonomy" id="329726"/>
    <lineage>
        <taxon>Bacteria</taxon>
        <taxon>Bacillati</taxon>
        <taxon>Cyanobacteriota</taxon>
        <taxon>Cyanophyceae</taxon>
        <taxon>Acaryochloridales</taxon>
        <taxon>Acaryochloridaceae</taxon>
        <taxon>Acaryochloris</taxon>
    </lineage>
</organism>
<name>ATP61_ACAM1</name>
<evidence type="ECO:0000255" key="1">
    <source>
        <dbReference type="HAMAP-Rule" id="MF_01393"/>
    </source>
</evidence>
<reference key="1">
    <citation type="journal article" date="2008" name="Proc. Natl. Acad. Sci. U.S.A.">
        <title>Niche adaptation and genome expansion in the chlorophyll d-producing cyanobacterium Acaryochloris marina.</title>
        <authorList>
            <person name="Swingley W.D."/>
            <person name="Chen M."/>
            <person name="Cheung P.C."/>
            <person name="Conrad A.L."/>
            <person name="Dejesa L.C."/>
            <person name="Hao J."/>
            <person name="Honchak B.M."/>
            <person name="Karbach L.E."/>
            <person name="Kurdoglu A."/>
            <person name="Lahiri S."/>
            <person name="Mastrian S.D."/>
            <person name="Miyashita H."/>
            <person name="Page L."/>
            <person name="Ramakrishna P."/>
            <person name="Satoh S."/>
            <person name="Sattley W.M."/>
            <person name="Shimada Y."/>
            <person name="Taylor H.L."/>
            <person name="Tomo T."/>
            <person name="Tsuchiya T."/>
            <person name="Wang Z.T."/>
            <person name="Raymond J."/>
            <person name="Mimuro M."/>
            <person name="Blankenship R.E."/>
            <person name="Touchman J.W."/>
        </authorList>
    </citation>
    <scope>NUCLEOTIDE SEQUENCE [LARGE SCALE GENOMIC DNA]</scope>
    <source>
        <strain>MBIC 11017</strain>
    </source>
</reference>
<comment type="function">
    <text evidence="1">Key component of the proton channel; it plays a direct role in the translocation of protons across the membrane.</text>
</comment>
<comment type="subunit">
    <text evidence="1">F-type ATPases have 2 components, CF(1) - the catalytic core - and CF(0) - the membrane proton channel. CF(1) has five subunits: alpha(3), beta(3), gamma(1), delta(1), epsilon(1). CF(0) has four main subunits: a, b, b' and c.</text>
</comment>
<comment type="subcellular location">
    <subcellularLocation>
        <location evidence="1">Cellular thylakoid membrane</location>
        <topology evidence="1">Multi-pass membrane protein</topology>
    </subcellularLocation>
</comment>
<comment type="similarity">
    <text evidence="1">Belongs to the ATPase A chain family.</text>
</comment>
<keyword id="KW-0066">ATP synthesis</keyword>
<keyword id="KW-0138">CF(0)</keyword>
<keyword id="KW-0375">Hydrogen ion transport</keyword>
<keyword id="KW-0406">Ion transport</keyword>
<keyword id="KW-0472">Membrane</keyword>
<keyword id="KW-1185">Reference proteome</keyword>
<keyword id="KW-0793">Thylakoid</keyword>
<keyword id="KW-0812">Transmembrane</keyword>
<keyword id="KW-1133">Transmembrane helix</keyword>
<keyword id="KW-0813">Transport</keyword>
<accession>B0BZK7</accession>
<sequence length="240" mass="26689">MPLASLEVGQHLYWQIGGLKVHGQVLITSWIVIGILVIVSVLATRKVERIPSGLQNFMEYALEFVRDLTKNQIGEKEYRPWVPFIGTLFLFIFVSNWSGALFPWKLISLPEGELAAPTNDINTTVALALCTSFVYFYAGFRKKGLGYFRKYIEPTPVLLPIAILEDFTKPLSLSFRLFGNILADELVVAVLVLLVPLIVPLPVMLLGLFTSGIQALVFATLAGAYIHESLEGHGEEEEAH</sequence>
<feature type="chain" id="PRO_0000362214" description="ATP synthase subunit a 1">
    <location>
        <begin position="1"/>
        <end position="240"/>
    </location>
</feature>
<feature type="transmembrane region" description="Helical" evidence="1">
    <location>
        <begin position="23"/>
        <end position="43"/>
    </location>
</feature>
<feature type="transmembrane region" description="Helical" evidence="1">
    <location>
        <begin position="82"/>
        <end position="102"/>
    </location>
</feature>
<feature type="transmembrane region" description="Helical" evidence="1">
    <location>
        <begin position="120"/>
        <end position="140"/>
    </location>
</feature>
<feature type="transmembrane region" description="Helical" evidence="1">
    <location>
        <begin position="186"/>
        <end position="206"/>
    </location>
</feature>
<feature type="transmembrane region" description="Helical" evidence="1">
    <location>
        <begin position="207"/>
        <end position="227"/>
    </location>
</feature>
<dbReference type="EMBL" id="CP000828">
    <property type="protein sequence ID" value="ABW25933.1"/>
    <property type="molecule type" value="Genomic_DNA"/>
</dbReference>
<dbReference type="SMR" id="B0BZK7"/>
<dbReference type="STRING" id="329726.AM1_0891"/>
<dbReference type="KEGG" id="amr:AM1_0891"/>
<dbReference type="eggNOG" id="COG0356">
    <property type="taxonomic scope" value="Bacteria"/>
</dbReference>
<dbReference type="HOGENOM" id="CLU_041018_2_4_3"/>
<dbReference type="Proteomes" id="UP000000268">
    <property type="component" value="Chromosome"/>
</dbReference>
<dbReference type="GO" id="GO:0031676">
    <property type="term" value="C:plasma membrane-derived thylakoid membrane"/>
    <property type="evidence" value="ECO:0007669"/>
    <property type="project" value="UniProtKB-SubCell"/>
</dbReference>
<dbReference type="GO" id="GO:0045259">
    <property type="term" value="C:proton-transporting ATP synthase complex"/>
    <property type="evidence" value="ECO:0007669"/>
    <property type="project" value="UniProtKB-KW"/>
</dbReference>
<dbReference type="GO" id="GO:0046933">
    <property type="term" value="F:proton-transporting ATP synthase activity, rotational mechanism"/>
    <property type="evidence" value="ECO:0007669"/>
    <property type="project" value="UniProtKB-UniRule"/>
</dbReference>
<dbReference type="CDD" id="cd00310">
    <property type="entry name" value="ATP-synt_Fo_a_6"/>
    <property type="match status" value="1"/>
</dbReference>
<dbReference type="FunFam" id="1.20.120.220:FF:000001">
    <property type="entry name" value="ATP synthase subunit a, chloroplastic"/>
    <property type="match status" value="1"/>
</dbReference>
<dbReference type="Gene3D" id="1.20.120.220">
    <property type="entry name" value="ATP synthase, F0 complex, subunit A"/>
    <property type="match status" value="1"/>
</dbReference>
<dbReference type="HAMAP" id="MF_01393">
    <property type="entry name" value="ATP_synth_a_bact"/>
    <property type="match status" value="1"/>
</dbReference>
<dbReference type="InterPro" id="IPR045082">
    <property type="entry name" value="ATP_syn_F0_a_bact/chloroplast"/>
</dbReference>
<dbReference type="InterPro" id="IPR000568">
    <property type="entry name" value="ATP_synth_F0_asu"/>
</dbReference>
<dbReference type="InterPro" id="IPR023011">
    <property type="entry name" value="ATP_synth_F0_asu_AS"/>
</dbReference>
<dbReference type="InterPro" id="IPR035908">
    <property type="entry name" value="F0_ATP_A_sf"/>
</dbReference>
<dbReference type="NCBIfam" id="TIGR01131">
    <property type="entry name" value="ATP_synt_6_or_A"/>
    <property type="match status" value="1"/>
</dbReference>
<dbReference type="PANTHER" id="PTHR42823">
    <property type="entry name" value="ATP SYNTHASE SUBUNIT A, CHLOROPLASTIC"/>
    <property type="match status" value="1"/>
</dbReference>
<dbReference type="PANTHER" id="PTHR42823:SF3">
    <property type="entry name" value="ATP SYNTHASE SUBUNIT A, CHLOROPLASTIC"/>
    <property type="match status" value="1"/>
</dbReference>
<dbReference type="Pfam" id="PF00119">
    <property type="entry name" value="ATP-synt_A"/>
    <property type="match status" value="1"/>
</dbReference>
<dbReference type="PRINTS" id="PR00123">
    <property type="entry name" value="ATPASEA"/>
</dbReference>
<dbReference type="SUPFAM" id="SSF81336">
    <property type="entry name" value="F1F0 ATP synthase subunit A"/>
    <property type="match status" value="1"/>
</dbReference>
<dbReference type="PROSITE" id="PS00449">
    <property type="entry name" value="ATPASE_A"/>
    <property type="match status" value="1"/>
</dbReference>